<comment type="function">
    <text evidence="1">Catalyzes the phosphorylation of the position 2 hydroxy group of 4-diphosphocytidyl-2C-methyl-D-erythritol.</text>
</comment>
<comment type="catalytic activity">
    <reaction evidence="1">
        <text>4-CDP-2-C-methyl-D-erythritol + ATP = 4-CDP-2-C-methyl-D-erythritol 2-phosphate + ADP + H(+)</text>
        <dbReference type="Rhea" id="RHEA:18437"/>
        <dbReference type="ChEBI" id="CHEBI:15378"/>
        <dbReference type="ChEBI" id="CHEBI:30616"/>
        <dbReference type="ChEBI" id="CHEBI:57823"/>
        <dbReference type="ChEBI" id="CHEBI:57919"/>
        <dbReference type="ChEBI" id="CHEBI:456216"/>
        <dbReference type="EC" id="2.7.1.148"/>
    </reaction>
</comment>
<comment type="pathway">
    <text evidence="1">Isoprenoid biosynthesis; isopentenyl diphosphate biosynthesis via DXP pathway; isopentenyl diphosphate from 1-deoxy-D-xylulose 5-phosphate: step 3/6.</text>
</comment>
<comment type="similarity">
    <text evidence="1">Belongs to the GHMP kinase family. IspE subfamily.</text>
</comment>
<evidence type="ECO:0000255" key="1">
    <source>
        <dbReference type="HAMAP-Rule" id="MF_00061"/>
    </source>
</evidence>
<keyword id="KW-0067">ATP-binding</keyword>
<keyword id="KW-0414">Isoprene biosynthesis</keyword>
<keyword id="KW-0418">Kinase</keyword>
<keyword id="KW-0547">Nucleotide-binding</keyword>
<keyword id="KW-1185">Reference proteome</keyword>
<keyword id="KW-0808">Transferase</keyword>
<dbReference type="EC" id="2.7.1.148" evidence="1"/>
<dbReference type="EMBL" id="CP000264">
    <property type="protein sequence ID" value="ABD53403.1"/>
    <property type="molecule type" value="Genomic_DNA"/>
</dbReference>
<dbReference type="RefSeq" id="WP_011453612.1">
    <property type="nucleotide sequence ID" value="NC_007802.1"/>
</dbReference>
<dbReference type="SMR" id="Q28V59"/>
<dbReference type="STRING" id="290400.Jann_0486"/>
<dbReference type="KEGG" id="jan:Jann_0486"/>
<dbReference type="eggNOG" id="COG1947">
    <property type="taxonomic scope" value="Bacteria"/>
</dbReference>
<dbReference type="HOGENOM" id="CLU_053057_1_0_5"/>
<dbReference type="OrthoDB" id="9809438at2"/>
<dbReference type="UniPathway" id="UPA00056">
    <property type="reaction ID" value="UER00094"/>
</dbReference>
<dbReference type="Proteomes" id="UP000008326">
    <property type="component" value="Chromosome"/>
</dbReference>
<dbReference type="GO" id="GO:0050515">
    <property type="term" value="F:4-(cytidine 5'-diphospho)-2-C-methyl-D-erythritol kinase activity"/>
    <property type="evidence" value="ECO:0007669"/>
    <property type="project" value="UniProtKB-UniRule"/>
</dbReference>
<dbReference type="GO" id="GO:0005524">
    <property type="term" value="F:ATP binding"/>
    <property type="evidence" value="ECO:0007669"/>
    <property type="project" value="UniProtKB-UniRule"/>
</dbReference>
<dbReference type="GO" id="GO:0019288">
    <property type="term" value="P:isopentenyl diphosphate biosynthetic process, methylerythritol 4-phosphate pathway"/>
    <property type="evidence" value="ECO:0007669"/>
    <property type="project" value="UniProtKB-UniRule"/>
</dbReference>
<dbReference type="GO" id="GO:0016114">
    <property type="term" value="P:terpenoid biosynthetic process"/>
    <property type="evidence" value="ECO:0007669"/>
    <property type="project" value="InterPro"/>
</dbReference>
<dbReference type="Gene3D" id="3.30.230.10">
    <property type="match status" value="1"/>
</dbReference>
<dbReference type="Gene3D" id="3.30.70.890">
    <property type="entry name" value="GHMP kinase, C-terminal domain"/>
    <property type="match status" value="1"/>
</dbReference>
<dbReference type="HAMAP" id="MF_00061">
    <property type="entry name" value="IspE"/>
    <property type="match status" value="1"/>
</dbReference>
<dbReference type="InterPro" id="IPR013750">
    <property type="entry name" value="GHMP_kinase_C_dom"/>
</dbReference>
<dbReference type="InterPro" id="IPR036554">
    <property type="entry name" value="GHMP_kinase_C_sf"/>
</dbReference>
<dbReference type="InterPro" id="IPR006204">
    <property type="entry name" value="GHMP_kinase_N_dom"/>
</dbReference>
<dbReference type="InterPro" id="IPR004424">
    <property type="entry name" value="IspE"/>
</dbReference>
<dbReference type="InterPro" id="IPR020568">
    <property type="entry name" value="Ribosomal_Su5_D2-typ_SF"/>
</dbReference>
<dbReference type="InterPro" id="IPR014721">
    <property type="entry name" value="Ribsml_uS5_D2-typ_fold_subgr"/>
</dbReference>
<dbReference type="NCBIfam" id="TIGR00154">
    <property type="entry name" value="ispE"/>
    <property type="match status" value="1"/>
</dbReference>
<dbReference type="NCBIfam" id="NF011202">
    <property type="entry name" value="PRK14608.1"/>
    <property type="match status" value="1"/>
</dbReference>
<dbReference type="PANTHER" id="PTHR43527">
    <property type="entry name" value="4-DIPHOSPHOCYTIDYL-2-C-METHYL-D-ERYTHRITOL KINASE, CHLOROPLASTIC"/>
    <property type="match status" value="1"/>
</dbReference>
<dbReference type="PANTHER" id="PTHR43527:SF2">
    <property type="entry name" value="4-DIPHOSPHOCYTIDYL-2-C-METHYL-D-ERYTHRITOL KINASE, CHLOROPLASTIC"/>
    <property type="match status" value="1"/>
</dbReference>
<dbReference type="Pfam" id="PF08544">
    <property type="entry name" value="GHMP_kinases_C"/>
    <property type="match status" value="1"/>
</dbReference>
<dbReference type="Pfam" id="PF00288">
    <property type="entry name" value="GHMP_kinases_N"/>
    <property type="match status" value="1"/>
</dbReference>
<dbReference type="PIRSF" id="PIRSF010376">
    <property type="entry name" value="IspE"/>
    <property type="match status" value="1"/>
</dbReference>
<dbReference type="SUPFAM" id="SSF55060">
    <property type="entry name" value="GHMP Kinase, C-terminal domain"/>
    <property type="match status" value="1"/>
</dbReference>
<dbReference type="SUPFAM" id="SSF54211">
    <property type="entry name" value="Ribosomal protein S5 domain 2-like"/>
    <property type="match status" value="1"/>
</dbReference>
<gene>
    <name evidence="1" type="primary">ispE</name>
    <name type="ordered locus">Jann_0486</name>
</gene>
<reference key="1">
    <citation type="submission" date="2006-02" db="EMBL/GenBank/DDBJ databases">
        <title>Complete sequence of chromosome of Jannaschia sp. CCS1.</title>
        <authorList>
            <consortium name="US DOE Joint Genome Institute"/>
            <person name="Copeland A."/>
            <person name="Lucas S."/>
            <person name="Lapidus A."/>
            <person name="Barry K."/>
            <person name="Detter J.C."/>
            <person name="Glavina del Rio T."/>
            <person name="Hammon N."/>
            <person name="Israni S."/>
            <person name="Pitluck S."/>
            <person name="Brettin T."/>
            <person name="Bruce D."/>
            <person name="Han C."/>
            <person name="Tapia R."/>
            <person name="Gilna P."/>
            <person name="Chertkov O."/>
            <person name="Saunders E."/>
            <person name="Schmutz J."/>
            <person name="Larimer F."/>
            <person name="Land M."/>
            <person name="Kyrpides N."/>
            <person name="Lykidis A."/>
            <person name="Moran M.A."/>
            <person name="Belas R."/>
            <person name="Ye W."/>
            <person name="Buchan A."/>
            <person name="Gonzalez J.M."/>
            <person name="Schell M.A."/>
            <person name="Richardson P."/>
        </authorList>
    </citation>
    <scope>NUCLEOTIDE SEQUENCE [LARGE SCALE GENOMIC DNA]</scope>
    <source>
        <strain>CCS1</strain>
    </source>
</reference>
<accession>Q28V59</accession>
<proteinExistence type="inferred from homology"/>
<feature type="chain" id="PRO_0000335719" description="4-diphosphocytidyl-2-C-methyl-D-erythritol kinase">
    <location>
        <begin position="1"/>
        <end position="276"/>
    </location>
</feature>
<feature type="active site" evidence="1">
    <location>
        <position position="13"/>
    </location>
</feature>
<feature type="active site" evidence="1">
    <location>
        <position position="131"/>
    </location>
</feature>
<feature type="binding site" evidence="1">
    <location>
        <begin position="94"/>
        <end position="104"/>
    </location>
    <ligand>
        <name>ATP</name>
        <dbReference type="ChEBI" id="CHEBI:30616"/>
    </ligand>
</feature>
<sequence length="276" mass="29214">MSAATFRGYAPAKVNLALHVTGRRVDGYHELDSLVVFAGVGDRLEIAPADALSLTVTGPRAEGVPDDARNLVWKAADWLAPGRGAAMTLDKHLPHAGGIGGGSADAACALRGLAEIWDVDVPDGAEALGADVPVCLHGQPVRMRGIGDVLDAVPPLPPMWIVLVNAGVEVPTGAVFKAMERVDNPPLPAPAWDGFDSFLVWLERTRNDMESSARSQAPVIGMVLERLRALPGCRFTRMSGSGGTCFGLFETEIAARDAALGLPKHWWVTYAPVLRA</sequence>
<organism>
    <name type="scientific">Jannaschia sp. (strain CCS1)</name>
    <dbReference type="NCBI Taxonomy" id="290400"/>
    <lineage>
        <taxon>Bacteria</taxon>
        <taxon>Pseudomonadati</taxon>
        <taxon>Pseudomonadota</taxon>
        <taxon>Alphaproteobacteria</taxon>
        <taxon>Rhodobacterales</taxon>
        <taxon>Roseobacteraceae</taxon>
        <taxon>Jannaschia</taxon>
    </lineage>
</organism>
<name>ISPE_JANSC</name>
<protein>
    <recommendedName>
        <fullName evidence="1">4-diphosphocytidyl-2-C-methyl-D-erythritol kinase</fullName>
        <shortName evidence="1">CMK</shortName>
        <ecNumber evidence="1">2.7.1.148</ecNumber>
    </recommendedName>
    <alternativeName>
        <fullName evidence="1">4-(cytidine-5'-diphospho)-2-C-methyl-D-erythritol kinase</fullName>
    </alternativeName>
</protein>